<feature type="chain" id="PRO_1000026130" description="ATP-dependent Clp protease proteolytic subunit">
    <location>
        <begin position="1"/>
        <end position="202"/>
    </location>
</feature>
<feature type="active site" description="Nucleophile" evidence="1">
    <location>
        <position position="106"/>
    </location>
</feature>
<feature type="active site" evidence="1">
    <location>
        <position position="131"/>
    </location>
</feature>
<name>CLPP_SHESR</name>
<reference key="1">
    <citation type="submission" date="2006-08" db="EMBL/GenBank/DDBJ databases">
        <title>Complete sequence of chromosome 1 of Shewanella sp. MR-7.</title>
        <authorList>
            <person name="Copeland A."/>
            <person name="Lucas S."/>
            <person name="Lapidus A."/>
            <person name="Barry K."/>
            <person name="Detter J.C."/>
            <person name="Glavina del Rio T."/>
            <person name="Hammon N."/>
            <person name="Israni S."/>
            <person name="Dalin E."/>
            <person name="Tice H."/>
            <person name="Pitluck S."/>
            <person name="Kiss H."/>
            <person name="Brettin T."/>
            <person name="Bruce D."/>
            <person name="Han C."/>
            <person name="Tapia R."/>
            <person name="Gilna P."/>
            <person name="Schmutz J."/>
            <person name="Larimer F."/>
            <person name="Land M."/>
            <person name="Hauser L."/>
            <person name="Kyrpides N."/>
            <person name="Mikhailova N."/>
            <person name="Nealson K."/>
            <person name="Konstantinidis K."/>
            <person name="Klappenbach J."/>
            <person name="Tiedje J."/>
            <person name="Richardson P."/>
        </authorList>
    </citation>
    <scope>NUCLEOTIDE SEQUENCE [LARGE SCALE GENOMIC DNA]</scope>
    <source>
        <strain>MR-7</strain>
    </source>
</reference>
<accession>Q0HTK7</accession>
<protein>
    <recommendedName>
        <fullName evidence="1">ATP-dependent Clp protease proteolytic subunit</fullName>
        <ecNumber evidence="1">3.4.21.92</ecNumber>
    </recommendedName>
    <alternativeName>
        <fullName evidence="1">Endopeptidase Clp</fullName>
    </alternativeName>
</protein>
<comment type="function">
    <text evidence="1">Cleaves peptides in various proteins in a process that requires ATP hydrolysis. Has a chymotrypsin-like activity. Plays a major role in the degradation of misfolded proteins.</text>
</comment>
<comment type="catalytic activity">
    <reaction evidence="1">
        <text>Hydrolysis of proteins to small peptides in the presence of ATP and magnesium. alpha-casein is the usual test substrate. In the absence of ATP, only oligopeptides shorter than five residues are hydrolyzed (such as succinyl-Leu-Tyr-|-NHMec, and Leu-Tyr-Leu-|-Tyr-Trp, in which cleavage of the -Tyr-|-Leu- and -Tyr-|-Trp bonds also occurs).</text>
        <dbReference type="EC" id="3.4.21.92"/>
    </reaction>
</comment>
<comment type="subunit">
    <text evidence="1">Fourteen ClpP subunits assemble into 2 heptameric rings which stack back to back to give a disk-like structure with a central cavity, resembling the structure of eukaryotic proteasomes.</text>
</comment>
<comment type="subcellular location">
    <subcellularLocation>
        <location evidence="1">Cytoplasm</location>
    </subcellularLocation>
</comment>
<comment type="similarity">
    <text evidence="1">Belongs to the peptidase S14 family.</text>
</comment>
<gene>
    <name evidence="1" type="primary">clpP</name>
    <name type="ordered locus">Shewmr7_2563</name>
</gene>
<keyword id="KW-0963">Cytoplasm</keyword>
<keyword id="KW-0378">Hydrolase</keyword>
<keyword id="KW-0645">Protease</keyword>
<keyword id="KW-0720">Serine protease</keyword>
<evidence type="ECO:0000255" key="1">
    <source>
        <dbReference type="HAMAP-Rule" id="MF_00444"/>
    </source>
</evidence>
<organism>
    <name type="scientific">Shewanella sp. (strain MR-7)</name>
    <dbReference type="NCBI Taxonomy" id="60481"/>
    <lineage>
        <taxon>Bacteria</taxon>
        <taxon>Pseudomonadati</taxon>
        <taxon>Pseudomonadota</taxon>
        <taxon>Gammaproteobacteria</taxon>
        <taxon>Alteromonadales</taxon>
        <taxon>Shewanellaceae</taxon>
        <taxon>Shewanella</taxon>
    </lineage>
</organism>
<sequence length="202" mass="22124">MHNASDIQSALVPMVIEQTAKGERSFDIYSRLLKERIIFLVGQVEEHMANLIVAQLLFLESESPDKDIFLYINSPGGSVTAGMAIYDTMQFIKPNVSTVCIGQAASMGAFLLAGGEKGKRFCLPNSRVMIHQPLGGFQGQASDIAIHAQEILGIKHKLNLMLAEHTGQPLEVIERDTDRDNFMSATQAVDYGLVDAVMTKRG</sequence>
<dbReference type="EC" id="3.4.21.92" evidence="1"/>
<dbReference type="EMBL" id="CP000444">
    <property type="protein sequence ID" value="ABI43548.1"/>
    <property type="molecule type" value="Genomic_DNA"/>
</dbReference>
<dbReference type="SMR" id="Q0HTK7"/>
<dbReference type="MEROPS" id="S14.001"/>
<dbReference type="KEGG" id="shm:Shewmr7_2563"/>
<dbReference type="HOGENOM" id="CLU_058707_3_2_6"/>
<dbReference type="GO" id="GO:0005737">
    <property type="term" value="C:cytoplasm"/>
    <property type="evidence" value="ECO:0007669"/>
    <property type="project" value="UniProtKB-SubCell"/>
</dbReference>
<dbReference type="GO" id="GO:0009368">
    <property type="term" value="C:endopeptidase Clp complex"/>
    <property type="evidence" value="ECO:0007669"/>
    <property type="project" value="TreeGrafter"/>
</dbReference>
<dbReference type="GO" id="GO:0004176">
    <property type="term" value="F:ATP-dependent peptidase activity"/>
    <property type="evidence" value="ECO:0007669"/>
    <property type="project" value="InterPro"/>
</dbReference>
<dbReference type="GO" id="GO:0051117">
    <property type="term" value="F:ATPase binding"/>
    <property type="evidence" value="ECO:0007669"/>
    <property type="project" value="TreeGrafter"/>
</dbReference>
<dbReference type="GO" id="GO:0004252">
    <property type="term" value="F:serine-type endopeptidase activity"/>
    <property type="evidence" value="ECO:0007669"/>
    <property type="project" value="UniProtKB-UniRule"/>
</dbReference>
<dbReference type="GO" id="GO:0006515">
    <property type="term" value="P:protein quality control for misfolded or incompletely synthesized proteins"/>
    <property type="evidence" value="ECO:0007669"/>
    <property type="project" value="TreeGrafter"/>
</dbReference>
<dbReference type="CDD" id="cd07017">
    <property type="entry name" value="S14_ClpP_2"/>
    <property type="match status" value="1"/>
</dbReference>
<dbReference type="FunFam" id="3.90.226.10:FF:000001">
    <property type="entry name" value="ATP-dependent Clp protease proteolytic subunit"/>
    <property type="match status" value="1"/>
</dbReference>
<dbReference type="Gene3D" id="3.90.226.10">
    <property type="entry name" value="2-enoyl-CoA Hydratase, Chain A, domain 1"/>
    <property type="match status" value="1"/>
</dbReference>
<dbReference type="HAMAP" id="MF_00444">
    <property type="entry name" value="ClpP"/>
    <property type="match status" value="1"/>
</dbReference>
<dbReference type="InterPro" id="IPR001907">
    <property type="entry name" value="ClpP"/>
</dbReference>
<dbReference type="InterPro" id="IPR029045">
    <property type="entry name" value="ClpP/crotonase-like_dom_sf"/>
</dbReference>
<dbReference type="InterPro" id="IPR023562">
    <property type="entry name" value="ClpP/TepA"/>
</dbReference>
<dbReference type="InterPro" id="IPR033135">
    <property type="entry name" value="ClpP_His_AS"/>
</dbReference>
<dbReference type="InterPro" id="IPR018215">
    <property type="entry name" value="ClpP_Ser_AS"/>
</dbReference>
<dbReference type="NCBIfam" id="TIGR00493">
    <property type="entry name" value="clpP"/>
    <property type="match status" value="1"/>
</dbReference>
<dbReference type="NCBIfam" id="NF001368">
    <property type="entry name" value="PRK00277.1"/>
    <property type="match status" value="1"/>
</dbReference>
<dbReference type="NCBIfam" id="NF009205">
    <property type="entry name" value="PRK12553.1"/>
    <property type="match status" value="1"/>
</dbReference>
<dbReference type="PANTHER" id="PTHR10381">
    <property type="entry name" value="ATP-DEPENDENT CLP PROTEASE PROTEOLYTIC SUBUNIT"/>
    <property type="match status" value="1"/>
</dbReference>
<dbReference type="PANTHER" id="PTHR10381:SF70">
    <property type="entry name" value="ATP-DEPENDENT CLP PROTEASE PROTEOLYTIC SUBUNIT"/>
    <property type="match status" value="1"/>
</dbReference>
<dbReference type="Pfam" id="PF00574">
    <property type="entry name" value="CLP_protease"/>
    <property type="match status" value="1"/>
</dbReference>
<dbReference type="PRINTS" id="PR00127">
    <property type="entry name" value="CLPPROTEASEP"/>
</dbReference>
<dbReference type="SUPFAM" id="SSF52096">
    <property type="entry name" value="ClpP/crotonase"/>
    <property type="match status" value="1"/>
</dbReference>
<dbReference type="PROSITE" id="PS00382">
    <property type="entry name" value="CLP_PROTEASE_HIS"/>
    <property type="match status" value="1"/>
</dbReference>
<dbReference type="PROSITE" id="PS00381">
    <property type="entry name" value="CLP_PROTEASE_SER"/>
    <property type="match status" value="1"/>
</dbReference>
<proteinExistence type="inferred from homology"/>